<proteinExistence type="inferred from homology"/>
<feature type="chain" id="PRO_1000125174" description="Sec-independent protein translocase protein TatA">
    <location>
        <begin position="1"/>
        <end position="72"/>
    </location>
</feature>
<feature type="transmembrane region" description="Helical" evidence="1">
    <location>
        <begin position="1"/>
        <end position="21"/>
    </location>
</feature>
<feature type="region of interest" description="Disordered" evidence="2">
    <location>
        <begin position="47"/>
        <end position="72"/>
    </location>
</feature>
<feature type="compositionally biased region" description="Polar residues" evidence="2">
    <location>
        <begin position="51"/>
        <end position="72"/>
    </location>
</feature>
<protein>
    <recommendedName>
        <fullName evidence="1">Sec-independent protein translocase protein TatA</fullName>
    </recommendedName>
</protein>
<accession>B7I4W9</accession>
<keyword id="KW-0997">Cell inner membrane</keyword>
<keyword id="KW-1003">Cell membrane</keyword>
<keyword id="KW-0472">Membrane</keyword>
<keyword id="KW-0653">Protein transport</keyword>
<keyword id="KW-0811">Translocation</keyword>
<keyword id="KW-0812">Transmembrane</keyword>
<keyword id="KW-1133">Transmembrane helix</keyword>
<keyword id="KW-0813">Transport</keyword>
<sequence>MAGLSIWHVVIFAIVVILLFGTSKLKNIGKDVGGAVRDFKKSVREEDEAASLNSPRTIDAQVKTSESTSVKS</sequence>
<evidence type="ECO:0000255" key="1">
    <source>
        <dbReference type="HAMAP-Rule" id="MF_00236"/>
    </source>
</evidence>
<evidence type="ECO:0000256" key="2">
    <source>
        <dbReference type="SAM" id="MobiDB-lite"/>
    </source>
</evidence>
<name>TATA_ACIB5</name>
<organism>
    <name type="scientific">Acinetobacter baumannii (strain AB0057)</name>
    <dbReference type="NCBI Taxonomy" id="480119"/>
    <lineage>
        <taxon>Bacteria</taxon>
        <taxon>Pseudomonadati</taxon>
        <taxon>Pseudomonadota</taxon>
        <taxon>Gammaproteobacteria</taxon>
        <taxon>Moraxellales</taxon>
        <taxon>Moraxellaceae</taxon>
        <taxon>Acinetobacter</taxon>
        <taxon>Acinetobacter calcoaceticus/baumannii complex</taxon>
    </lineage>
</organism>
<reference key="1">
    <citation type="journal article" date="2008" name="J. Bacteriol.">
        <title>Comparative genome sequence analysis of multidrug-resistant Acinetobacter baumannii.</title>
        <authorList>
            <person name="Adams M.D."/>
            <person name="Goglin K."/>
            <person name="Molyneaux N."/>
            <person name="Hujer K.M."/>
            <person name="Lavender H."/>
            <person name="Jamison J.J."/>
            <person name="MacDonald I.J."/>
            <person name="Martin K.M."/>
            <person name="Russo T."/>
            <person name="Campagnari A.A."/>
            <person name="Hujer A.M."/>
            <person name="Bonomo R.A."/>
            <person name="Gill S.R."/>
        </authorList>
    </citation>
    <scope>NUCLEOTIDE SEQUENCE [LARGE SCALE GENOMIC DNA]</scope>
    <source>
        <strain>AB0057</strain>
    </source>
</reference>
<comment type="function">
    <text evidence="1">Part of the twin-arginine translocation (Tat) system that transports large folded proteins containing a characteristic twin-arginine motif in their signal peptide across membranes. TatA could form the protein-conducting channel of the Tat system.</text>
</comment>
<comment type="subunit">
    <text evidence="1">The Tat system comprises two distinct complexes: a TatABC complex, containing multiple copies of TatA, TatB and TatC subunits, and a separate TatA complex, containing only TatA subunits. Substrates initially bind to the TatABC complex, which probably triggers association of the separate TatA complex to form the active translocon.</text>
</comment>
<comment type="subcellular location">
    <subcellularLocation>
        <location evidence="1">Cell inner membrane</location>
        <topology evidence="1">Single-pass membrane protein</topology>
    </subcellularLocation>
</comment>
<comment type="similarity">
    <text evidence="1">Belongs to the TatA/E family.</text>
</comment>
<gene>
    <name evidence="1" type="primary">tatA</name>
    <name type="ordered locus">AB57_0570</name>
</gene>
<dbReference type="EMBL" id="CP001182">
    <property type="protein sequence ID" value="ACJ39991.1"/>
    <property type="molecule type" value="Genomic_DNA"/>
</dbReference>
<dbReference type="RefSeq" id="WP_000908081.1">
    <property type="nucleotide sequence ID" value="NC_011586.2"/>
</dbReference>
<dbReference type="SMR" id="B7I4W9"/>
<dbReference type="KEGG" id="abn:AB57_0570"/>
<dbReference type="HOGENOM" id="CLU_086034_5_3_6"/>
<dbReference type="Proteomes" id="UP000007094">
    <property type="component" value="Chromosome"/>
</dbReference>
<dbReference type="GO" id="GO:0033281">
    <property type="term" value="C:TAT protein transport complex"/>
    <property type="evidence" value="ECO:0007669"/>
    <property type="project" value="UniProtKB-UniRule"/>
</dbReference>
<dbReference type="GO" id="GO:0008320">
    <property type="term" value="F:protein transmembrane transporter activity"/>
    <property type="evidence" value="ECO:0007669"/>
    <property type="project" value="UniProtKB-UniRule"/>
</dbReference>
<dbReference type="GO" id="GO:0043953">
    <property type="term" value="P:protein transport by the Tat complex"/>
    <property type="evidence" value="ECO:0007669"/>
    <property type="project" value="UniProtKB-UniRule"/>
</dbReference>
<dbReference type="Gene3D" id="1.20.5.3310">
    <property type="match status" value="1"/>
</dbReference>
<dbReference type="HAMAP" id="MF_00236">
    <property type="entry name" value="TatA_E"/>
    <property type="match status" value="1"/>
</dbReference>
<dbReference type="InterPro" id="IPR003369">
    <property type="entry name" value="TatA/B/E"/>
</dbReference>
<dbReference type="InterPro" id="IPR006312">
    <property type="entry name" value="TatA/E"/>
</dbReference>
<dbReference type="NCBIfam" id="TIGR01411">
    <property type="entry name" value="tatAE"/>
    <property type="match status" value="1"/>
</dbReference>
<dbReference type="PANTHER" id="PTHR42982">
    <property type="entry name" value="SEC-INDEPENDENT PROTEIN TRANSLOCASE PROTEIN TATA"/>
    <property type="match status" value="1"/>
</dbReference>
<dbReference type="PANTHER" id="PTHR42982:SF1">
    <property type="entry name" value="SEC-INDEPENDENT PROTEIN TRANSLOCASE PROTEIN TATA"/>
    <property type="match status" value="1"/>
</dbReference>
<dbReference type="Pfam" id="PF02416">
    <property type="entry name" value="TatA_B_E"/>
    <property type="match status" value="1"/>
</dbReference>